<reference key="1">
    <citation type="journal article" date="2010" name="Genome Biol. Evol.">
        <title>Continuing evolution of Burkholderia mallei through genome reduction and large-scale rearrangements.</title>
        <authorList>
            <person name="Losada L."/>
            <person name="Ronning C.M."/>
            <person name="DeShazer D."/>
            <person name="Woods D."/>
            <person name="Fedorova N."/>
            <person name="Kim H.S."/>
            <person name="Shabalina S.A."/>
            <person name="Pearson T.R."/>
            <person name="Brinkac L."/>
            <person name="Tan P."/>
            <person name="Nandi T."/>
            <person name="Crabtree J."/>
            <person name="Badger J."/>
            <person name="Beckstrom-Sternberg S."/>
            <person name="Saqib M."/>
            <person name="Schutzer S.E."/>
            <person name="Keim P."/>
            <person name="Nierman W.C."/>
        </authorList>
    </citation>
    <scope>NUCLEOTIDE SEQUENCE [LARGE SCALE GENOMIC DNA]</scope>
    <source>
        <strain>1710b</strain>
    </source>
</reference>
<comment type="function">
    <text evidence="1">DNA ligase that catalyzes the formation of phosphodiester linkages between 5'-phosphoryl and 3'-hydroxyl groups in double-stranded DNA using NAD as a coenzyme and as the energy source for the reaction. It is essential for DNA replication and repair of damaged DNA.</text>
</comment>
<comment type="catalytic activity">
    <reaction evidence="1">
        <text>NAD(+) + (deoxyribonucleotide)n-3'-hydroxyl + 5'-phospho-(deoxyribonucleotide)m = (deoxyribonucleotide)n+m + AMP + beta-nicotinamide D-nucleotide.</text>
        <dbReference type="EC" id="6.5.1.2"/>
    </reaction>
</comment>
<comment type="cofactor">
    <cofactor evidence="1">
        <name>Mg(2+)</name>
        <dbReference type="ChEBI" id="CHEBI:18420"/>
    </cofactor>
    <cofactor evidence="1">
        <name>Mn(2+)</name>
        <dbReference type="ChEBI" id="CHEBI:29035"/>
    </cofactor>
</comment>
<comment type="similarity">
    <text evidence="1">Belongs to the NAD-dependent DNA ligase family. LigA subfamily.</text>
</comment>
<gene>
    <name evidence="1" type="primary">ligA</name>
    <name type="ordered locus">BURPS1710b_2588</name>
</gene>
<keyword id="KW-0227">DNA damage</keyword>
<keyword id="KW-0234">DNA repair</keyword>
<keyword id="KW-0235">DNA replication</keyword>
<keyword id="KW-0436">Ligase</keyword>
<keyword id="KW-0460">Magnesium</keyword>
<keyword id="KW-0464">Manganese</keyword>
<keyword id="KW-0479">Metal-binding</keyword>
<keyword id="KW-0520">NAD</keyword>
<keyword id="KW-0862">Zinc</keyword>
<organism>
    <name type="scientific">Burkholderia pseudomallei (strain 1710b)</name>
    <dbReference type="NCBI Taxonomy" id="320372"/>
    <lineage>
        <taxon>Bacteria</taxon>
        <taxon>Pseudomonadati</taxon>
        <taxon>Pseudomonadota</taxon>
        <taxon>Betaproteobacteria</taxon>
        <taxon>Burkholderiales</taxon>
        <taxon>Burkholderiaceae</taxon>
        <taxon>Burkholderia</taxon>
        <taxon>pseudomallei group</taxon>
    </lineage>
</organism>
<accession>Q3JR23</accession>
<sequence>MARSPVEPPASQPAKRAAWLRAELERANYAYYVLDQPDLPDAEYDRLFVELQRIEAEHPDLVTPDSPTQRVGGEAASGFTPVVHDKPMLSLNNGFADEDVIAFDKRVADGLDKATDLAGTVTEPVEYACELKFDGLAISLRYENGRFVQASTRGDGTTGEDVTENIRTIRAIPLTLKGKRIPRMLDVRGEVLMFKRDFARLNERQRAAGQREFANPRNAAAGSLRQLDSKITASRPLSFFAYGIGVLDGADMPDTHSGLLDWYETLGLPVNRERAVVRGAAGLLAFFHSVGERRESLPYDIDGVVYKVNRRDEQDRLGFVSRAPRFALAHKFPAQEALTKLIAIDVQVGRTGAITPVARLEPVFVGGATVTNATLHNEDEVRRKDIRIGDTVIVRRAGDVIPEVVSAVLDRRPADAQEFVMPTECPECGSRIERLPDEAIARCTGGLFCPAQRKQALWHFAQRRALDIDGLGEKIIDQLVEQNLVRTPADLFNLGFSTLVALDRFAEKSARNLIDSLEKAKHTTLARFIYALGIRHVGESTAKDLAKHFGSLDPIMHAPIDALLEVNDVGPIVAESIHQFFAEEHNRTVIEQLRARGKVTWPEGPPAPRAPQGVLAGKTVVLTGTLPTLTREAAKEMLEAAGAKVAGSVSKKTDYVVAGADAGSKLAKAEELGIPVLDEAGMHTLLEGHAR</sequence>
<dbReference type="EC" id="6.5.1.2" evidence="1"/>
<dbReference type="EMBL" id="CP000124">
    <property type="protein sequence ID" value="ABA49711.1"/>
    <property type="molecule type" value="Genomic_DNA"/>
</dbReference>
<dbReference type="RefSeq" id="WP_004527294.1">
    <property type="nucleotide sequence ID" value="NC_007434.1"/>
</dbReference>
<dbReference type="SMR" id="Q3JR23"/>
<dbReference type="EnsemblBacteria" id="ABA49711">
    <property type="protein sequence ID" value="ABA49711"/>
    <property type="gene ID" value="BURPS1710b_2588"/>
</dbReference>
<dbReference type="KEGG" id="bpm:BURPS1710b_2588"/>
<dbReference type="HOGENOM" id="CLU_007764_2_1_4"/>
<dbReference type="Proteomes" id="UP000002700">
    <property type="component" value="Chromosome I"/>
</dbReference>
<dbReference type="GO" id="GO:0005829">
    <property type="term" value="C:cytosol"/>
    <property type="evidence" value="ECO:0007669"/>
    <property type="project" value="TreeGrafter"/>
</dbReference>
<dbReference type="GO" id="GO:0003677">
    <property type="term" value="F:DNA binding"/>
    <property type="evidence" value="ECO:0007669"/>
    <property type="project" value="InterPro"/>
</dbReference>
<dbReference type="GO" id="GO:0003911">
    <property type="term" value="F:DNA ligase (NAD+) activity"/>
    <property type="evidence" value="ECO:0007669"/>
    <property type="project" value="UniProtKB-UniRule"/>
</dbReference>
<dbReference type="GO" id="GO:0046872">
    <property type="term" value="F:metal ion binding"/>
    <property type="evidence" value="ECO:0007669"/>
    <property type="project" value="UniProtKB-KW"/>
</dbReference>
<dbReference type="GO" id="GO:0006281">
    <property type="term" value="P:DNA repair"/>
    <property type="evidence" value="ECO:0007669"/>
    <property type="project" value="UniProtKB-KW"/>
</dbReference>
<dbReference type="GO" id="GO:0006260">
    <property type="term" value="P:DNA replication"/>
    <property type="evidence" value="ECO:0007669"/>
    <property type="project" value="UniProtKB-KW"/>
</dbReference>
<dbReference type="CDD" id="cd17748">
    <property type="entry name" value="BRCT_DNA_ligase_like"/>
    <property type="match status" value="1"/>
</dbReference>
<dbReference type="CDD" id="cd00114">
    <property type="entry name" value="LIGANc"/>
    <property type="match status" value="1"/>
</dbReference>
<dbReference type="FunFam" id="1.10.150.20:FF:000006">
    <property type="entry name" value="DNA ligase"/>
    <property type="match status" value="1"/>
</dbReference>
<dbReference type="FunFam" id="1.10.150.20:FF:000007">
    <property type="entry name" value="DNA ligase"/>
    <property type="match status" value="1"/>
</dbReference>
<dbReference type="FunFam" id="1.10.287.610:FF:000002">
    <property type="entry name" value="DNA ligase"/>
    <property type="match status" value="1"/>
</dbReference>
<dbReference type="FunFam" id="2.40.50.140:FF:000012">
    <property type="entry name" value="DNA ligase"/>
    <property type="match status" value="1"/>
</dbReference>
<dbReference type="FunFam" id="3.30.470.30:FF:000001">
    <property type="entry name" value="DNA ligase"/>
    <property type="match status" value="1"/>
</dbReference>
<dbReference type="FunFam" id="3.40.50.10190:FF:000054">
    <property type="entry name" value="DNA ligase"/>
    <property type="match status" value="1"/>
</dbReference>
<dbReference type="Gene3D" id="6.20.10.30">
    <property type="match status" value="1"/>
</dbReference>
<dbReference type="Gene3D" id="1.10.150.20">
    <property type="entry name" value="5' to 3' exonuclease, C-terminal subdomain"/>
    <property type="match status" value="2"/>
</dbReference>
<dbReference type="Gene3D" id="3.40.50.10190">
    <property type="entry name" value="BRCT domain"/>
    <property type="match status" value="1"/>
</dbReference>
<dbReference type="Gene3D" id="3.30.470.30">
    <property type="entry name" value="DNA ligase/mRNA capping enzyme"/>
    <property type="match status" value="1"/>
</dbReference>
<dbReference type="Gene3D" id="1.10.287.610">
    <property type="entry name" value="Helix hairpin bin"/>
    <property type="match status" value="1"/>
</dbReference>
<dbReference type="Gene3D" id="2.40.50.140">
    <property type="entry name" value="Nucleic acid-binding proteins"/>
    <property type="match status" value="1"/>
</dbReference>
<dbReference type="HAMAP" id="MF_01588">
    <property type="entry name" value="DNA_ligase_A"/>
    <property type="match status" value="1"/>
</dbReference>
<dbReference type="InterPro" id="IPR001357">
    <property type="entry name" value="BRCT_dom"/>
</dbReference>
<dbReference type="InterPro" id="IPR036420">
    <property type="entry name" value="BRCT_dom_sf"/>
</dbReference>
<dbReference type="InterPro" id="IPR041663">
    <property type="entry name" value="DisA/LigA_HHH"/>
</dbReference>
<dbReference type="InterPro" id="IPR001679">
    <property type="entry name" value="DNA_ligase"/>
</dbReference>
<dbReference type="InterPro" id="IPR018239">
    <property type="entry name" value="DNA_ligase_AS"/>
</dbReference>
<dbReference type="InterPro" id="IPR033136">
    <property type="entry name" value="DNA_ligase_CS"/>
</dbReference>
<dbReference type="InterPro" id="IPR013839">
    <property type="entry name" value="DNAligase_adenylation"/>
</dbReference>
<dbReference type="InterPro" id="IPR013840">
    <property type="entry name" value="DNAligase_N"/>
</dbReference>
<dbReference type="InterPro" id="IPR003583">
    <property type="entry name" value="Hlx-hairpin-Hlx_DNA-bd_motif"/>
</dbReference>
<dbReference type="InterPro" id="IPR012340">
    <property type="entry name" value="NA-bd_OB-fold"/>
</dbReference>
<dbReference type="InterPro" id="IPR004150">
    <property type="entry name" value="NAD_DNA_ligase_OB"/>
</dbReference>
<dbReference type="InterPro" id="IPR010994">
    <property type="entry name" value="RuvA_2-like"/>
</dbReference>
<dbReference type="InterPro" id="IPR004149">
    <property type="entry name" value="Znf_DNAligase_C4"/>
</dbReference>
<dbReference type="NCBIfam" id="TIGR00575">
    <property type="entry name" value="dnlj"/>
    <property type="match status" value="1"/>
</dbReference>
<dbReference type="NCBIfam" id="NF005932">
    <property type="entry name" value="PRK07956.1"/>
    <property type="match status" value="1"/>
</dbReference>
<dbReference type="PANTHER" id="PTHR23389">
    <property type="entry name" value="CHROMOSOME TRANSMISSION FIDELITY FACTOR 18"/>
    <property type="match status" value="1"/>
</dbReference>
<dbReference type="PANTHER" id="PTHR23389:SF9">
    <property type="entry name" value="DNA LIGASE"/>
    <property type="match status" value="1"/>
</dbReference>
<dbReference type="Pfam" id="PF00533">
    <property type="entry name" value="BRCT"/>
    <property type="match status" value="1"/>
</dbReference>
<dbReference type="Pfam" id="PF01653">
    <property type="entry name" value="DNA_ligase_aden"/>
    <property type="match status" value="1"/>
</dbReference>
<dbReference type="Pfam" id="PF03120">
    <property type="entry name" value="DNA_ligase_OB"/>
    <property type="match status" value="1"/>
</dbReference>
<dbReference type="Pfam" id="PF03119">
    <property type="entry name" value="DNA_ligase_ZBD"/>
    <property type="match status" value="1"/>
</dbReference>
<dbReference type="Pfam" id="PF12826">
    <property type="entry name" value="HHH_2"/>
    <property type="match status" value="1"/>
</dbReference>
<dbReference type="Pfam" id="PF14520">
    <property type="entry name" value="HHH_5"/>
    <property type="match status" value="1"/>
</dbReference>
<dbReference type="Pfam" id="PF22745">
    <property type="entry name" value="Nlig-Ia"/>
    <property type="match status" value="1"/>
</dbReference>
<dbReference type="PIRSF" id="PIRSF001604">
    <property type="entry name" value="LigA"/>
    <property type="match status" value="1"/>
</dbReference>
<dbReference type="SMART" id="SM00292">
    <property type="entry name" value="BRCT"/>
    <property type="match status" value="1"/>
</dbReference>
<dbReference type="SMART" id="SM00278">
    <property type="entry name" value="HhH1"/>
    <property type="match status" value="4"/>
</dbReference>
<dbReference type="SMART" id="SM00532">
    <property type="entry name" value="LIGANc"/>
    <property type="match status" value="1"/>
</dbReference>
<dbReference type="SUPFAM" id="SSF52113">
    <property type="entry name" value="BRCT domain"/>
    <property type="match status" value="1"/>
</dbReference>
<dbReference type="SUPFAM" id="SSF56091">
    <property type="entry name" value="DNA ligase/mRNA capping enzyme, catalytic domain"/>
    <property type="match status" value="1"/>
</dbReference>
<dbReference type="SUPFAM" id="SSF50249">
    <property type="entry name" value="Nucleic acid-binding proteins"/>
    <property type="match status" value="1"/>
</dbReference>
<dbReference type="SUPFAM" id="SSF47781">
    <property type="entry name" value="RuvA domain 2-like"/>
    <property type="match status" value="1"/>
</dbReference>
<dbReference type="PROSITE" id="PS50172">
    <property type="entry name" value="BRCT"/>
    <property type="match status" value="1"/>
</dbReference>
<dbReference type="PROSITE" id="PS01055">
    <property type="entry name" value="DNA_LIGASE_N1"/>
    <property type="match status" value="1"/>
</dbReference>
<dbReference type="PROSITE" id="PS01056">
    <property type="entry name" value="DNA_LIGASE_N2"/>
    <property type="match status" value="1"/>
</dbReference>
<evidence type="ECO:0000255" key="1">
    <source>
        <dbReference type="HAMAP-Rule" id="MF_01588"/>
    </source>
</evidence>
<proteinExistence type="inferred from homology"/>
<name>DNLJ_BURP1</name>
<feature type="chain" id="PRO_0000313167" description="DNA ligase">
    <location>
        <begin position="1"/>
        <end position="691"/>
    </location>
</feature>
<feature type="domain" description="BRCT" evidence="1">
    <location>
        <begin position="610"/>
        <end position="691"/>
    </location>
</feature>
<feature type="active site" description="N6-AMP-lysine intermediate" evidence="1">
    <location>
        <position position="132"/>
    </location>
</feature>
<feature type="binding site" evidence="1">
    <location>
        <begin position="41"/>
        <end position="45"/>
    </location>
    <ligand>
        <name>NAD(+)</name>
        <dbReference type="ChEBI" id="CHEBI:57540"/>
    </ligand>
</feature>
<feature type="binding site" evidence="1">
    <location>
        <begin position="90"/>
        <end position="91"/>
    </location>
    <ligand>
        <name>NAD(+)</name>
        <dbReference type="ChEBI" id="CHEBI:57540"/>
    </ligand>
</feature>
<feature type="binding site" evidence="1">
    <location>
        <position position="130"/>
    </location>
    <ligand>
        <name>NAD(+)</name>
        <dbReference type="ChEBI" id="CHEBI:57540"/>
    </ligand>
</feature>
<feature type="binding site" evidence="1">
    <location>
        <position position="153"/>
    </location>
    <ligand>
        <name>NAD(+)</name>
        <dbReference type="ChEBI" id="CHEBI:57540"/>
    </ligand>
</feature>
<feature type="binding site" evidence="1">
    <location>
        <position position="190"/>
    </location>
    <ligand>
        <name>NAD(+)</name>
        <dbReference type="ChEBI" id="CHEBI:57540"/>
    </ligand>
</feature>
<feature type="binding site" evidence="1">
    <location>
        <position position="307"/>
    </location>
    <ligand>
        <name>NAD(+)</name>
        <dbReference type="ChEBI" id="CHEBI:57540"/>
    </ligand>
</feature>
<feature type="binding site" evidence="1">
    <location>
        <position position="331"/>
    </location>
    <ligand>
        <name>NAD(+)</name>
        <dbReference type="ChEBI" id="CHEBI:57540"/>
    </ligand>
</feature>
<feature type="binding site" evidence="1">
    <location>
        <position position="425"/>
    </location>
    <ligand>
        <name>Zn(2+)</name>
        <dbReference type="ChEBI" id="CHEBI:29105"/>
    </ligand>
</feature>
<feature type="binding site" evidence="1">
    <location>
        <position position="428"/>
    </location>
    <ligand>
        <name>Zn(2+)</name>
        <dbReference type="ChEBI" id="CHEBI:29105"/>
    </ligand>
</feature>
<feature type="binding site" evidence="1">
    <location>
        <position position="443"/>
    </location>
    <ligand>
        <name>Zn(2+)</name>
        <dbReference type="ChEBI" id="CHEBI:29105"/>
    </ligand>
</feature>
<feature type="binding site" evidence="1">
    <location>
        <position position="449"/>
    </location>
    <ligand>
        <name>Zn(2+)</name>
        <dbReference type="ChEBI" id="CHEBI:29105"/>
    </ligand>
</feature>
<protein>
    <recommendedName>
        <fullName evidence="1">DNA ligase</fullName>
        <ecNumber evidence="1">6.5.1.2</ecNumber>
    </recommendedName>
    <alternativeName>
        <fullName evidence="1">Polydeoxyribonucleotide synthase [NAD(+)]</fullName>
    </alternativeName>
</protein>